<name>RECF_SHEPW</name>
<comment type="function">
    <text evidence="1">The RecF protein is involved in DNA metabolism; it is required for DNA replication and normal SOS inducibility. RecF binds preferentially to single-stranded, linear DNA. It also seems to bind ATP.</text>
</comment>
<comment type="subcellular location">
    <subcellularLocation>
        <location evidence="1">Cytoplasm</location>
    </subcellularLocation>
</comment>
<comment type="similarity">
    <text evidence="1">Belongs to the RecF family.</text>
</comment>
<proteinExistence type="inferred from homology"/>
<feature type="chain" id="PRO_1000121154" description="DNA replication and repair protein RecF">
    <location>
        <begin position="1"/>
        <end position="360"/>
    </location>
</feature>
<feature type="binding site" evidence="1">
    <location>
        <begin position="30"/>
        <end position="37"/>
    </location>
    <ligand>
        <name>ATP</name>
        <dbReference type="ChEBI" id="CHEBI:30616"/>
    </ligand>
</feature>
<gene>
    <name evidence="1" type="primary">recF</name>
    <name type="ordered locus">swp_0017</name>
</gene>
<accession>B8CH73</accession>
<evidence type="ECO:0000255" key="1">
    <source>
        <dbReference type="HAMAP-Rule" id="MF_00365"/>
    </source>
</evidence>
<protein>
    <recommendedName>
        <fullName evidence="1">DNA replication and repair protein RecF</fullName>
    </recommendedName>
</protein>
<reference key="1">
    <citation type="journal article" date="2008" name="PLoS ONE">
        <title>Environmental adaptation: genomic analysis of the piezotolerant and psychrotolerant deep-sea iron reducing bacterium Shewanella piezotolerans WP3.</title>
        <authorList>
            <person name="Wang F."/>
            <person name="Wang J."/>
            <person name="Jian H."/>
            <person name="Zhang B."/>
            <person name="Li S."/>
            <person name="Wang F."/>
            <person name="Zeng X."/>
            <person name="Gao L."/>
            <person name="Bartlett D.H."/>
            <person name="Yu J."/>
            <person name="Hu S."/>
            <person name="Xiao X."/>
        </authorList>
    </citation>
    <scope>NUCLEOTIDE SEQUENCE [LARGE SCALE GENOMIC DNA]</scope>
    <source>
        <strain>WP3 / JCM 13877</strain>
    </source>
</reference>
<organism>
    <name type="scientific">Shewanella piezotolerans (strain WP3 / JCM 13877)</name>
    <dbReference type="NCBI Taxonomy" id="225849"/>
    <lineage>
        <taxon>Bacteria</taxon>
        <taxon>Pseudomonadati</taxon>
        <taxon>Pseudomonadota</taxon>
        <taxon>Gammaproteobacteria</taxon>
        <taxon>Alteromonadales</taxon>
        <taxon>Shewanellaceae</taxon>
        <taxon>Shewanella</taxon>
    </lineage>
</organism>
<sequence>MSLNRLHIEAFRNITSAQLQPGDGLNVIYGQNGSGKTSILEAIYFLGMGRSFRSHLSQRVINNDADALTLFANMQSAEDESKIGLRRFRSGEIEVKINGDKVKRLSTLAETLPIQVITPESFSLLFEGPKSRRQFIDWGAFHSDPRFYAAWVNVRRILKQRNQLLRDESPYSSIQFWDKEFIRYAELVTEIRKQYVDSLNELLKGIIEEFLPQVDVKVSFTRGWDSKTEYAQLLETQYPRDLATGFTVSGPHKADLRLRVGTLPAQDALSRGQLKLLVCALRIAQGKLLKQQIDKKSIYLVDDLPSELDAQHRKLLLQQLADTGAQVFVTAIEPAAIVDSLITPPSKMFHVEHGRVTVIE</sequence>
<dbReference type="EMBL" id="CP000472">
    <property type="protein sequence ID" value="ACJ26865.1"/>
    <property type="molecule type" value="Genomic_DNA"/>
</dbReference>
<dbReference type="RefSeq" id="WP_020910249.1">
    <property type="nucleotide sequence ID" value="NC_011566.1"/>
</dbReference>
<dbReference type="SMR" id="B8CH73"/>
<dbReference type="STRING" id="225849.swp_0017"/>
<dbReference type="KEGG" id="swp:swp_0017"/>
<dbReference type="eggNOG" id="COG1195">
    <property type="taxonomic scope" value="Bacteria"/>
</dbReference>
<dbReference type="HOGENOM" id="CLU_040267_0_0_6"/>
<dbReference type="OrthoDB" id="9803889at2"/>
<dbReference type="Proteomes" id="UP000000753">
    <property type="component" value="Chromosome"/>
</dbReference>
<dbReference type="GO" id="GO:0005737">
    <property type="term" value="C:cytoplasm"/>
    <property type="evidence" value="ECO:0007669"/>
    <property type="project" value="UniProtKB-SubCell"/>
</dbReference>
<dbReference type="GO" id="GO:0005524">
    <property type="term" value="F:ATP binding"/>
    <property type="evidence" value="ECO:0007669"/>
    <property type="project" value="UniProtKB-UniRule"/>
</dbReference>
<dbReference type="GO" id="GO:0003697">
    <property type="term" value="F:single-stranded DNA binding"/>
    <property type="evidence" value="ECO:0007669"/>
    <property type="project" value="UniProtKB-UniRule"/>
</dbReference>
<dbReference type="GO" id="GO:0006260">
    <property type="term" value="P:DNA replication"/>
    <property type="evidence" value="ECO:0007669"/>
    <property type="project" value="UniProtKB-UniRule"/>
</dbReference>
<dbReference type="GO" id="GO:0000731">
    <property type="term" value="P:DNA synthesis involved in DNA repair"/>
    <property type="evidence" value="ECO:0007669"/>
    <property type="project" value="TreeGrafter"/>
</dbReference>
<dbReference type="GO" id="GO:0006302">
    <property type="term" value="P:double-strand break repair"/>
    <property type="evidence" value="ECO:0007669"/>
    <property type="project" value="TreeGrafter"/>
</dbReference>
<dbReference type="GO" id="GO:0009432">
    <property type="term" value="P:SOS response"/>
    <property type="evidence" value="ECO:0007669"/>
    <property type="project" value="UniProtKB-UniRule"/>
</dbReference>
<dbReference type="Gene3D" id="3.40.50.300">
    <property type="entry name" value="P-loop containing nucleotide triphosphate hydrolases"/>
    <property type="match status" value="1"/>
</dbReference>
<dbReference type="Gene3D" id="1.20.1050.90">
    <property type="entry name" value="RecF/RecN/SMC, N-terminal domain"/>
    <property type="match status" value="1"/>
</dbReference>
<dbReference type="HAMAP" id="MF_00365">
    <property type="entry name" value="RecF"/>
    <property type="match status" value="1"/>
</dbReference>
<dbReference type="InterPro" id="IPR001238">
    <property type="entry name" value="DNA-binding_RecF"/>
</dbReference>
<dbReference type="InterPro" id="IPR018078">
    <property type="entry name" value="DNA-binding_RecF_CS"/>
</dbReference>
<dbReference type="InterPro" id="IPR027417">
    <property type="entry name" value="P-loop_NTPase"/>
</dbReference>
<dbReference type="InterPro" id="IPR003395">
    <property type="entry name" value="RecF/RecN/SMC_N"/>
</dbReference>
<dbReference type="InterPro" id="IPR042174">
    <property type="entry name" value="RecF_2"/>
</dbReference>
<dbReference type="NCBIfam" id="TIGR00611">
    <property type="entry name" value="recf"/>
    <property type="match status" value="1"/>
</dbReference>
<dbReference type="PANTHER" id="PTHR32182">
    <property type="entry name" value="DNA REPLICATION AND REPAIR PROTEIN RECF"/>
    <property type="match status" value="1"/>
</dbReference>
<dbReference type="PANTHER" id="PTHR32182:SF0">
    <property type="entry name" value="DNA REPLICATION AND REPAIR PROTEIN RECF"/>
    <property type="match status" value="1"/>
</dbReference>
<dbReference type="Pfam" id="PF02463">
    <property type="entry name" value="SMC_N"/>
    <property type="match status" value="1"/>
</dbReference>
<dbReference type="SUPFAM" id="SSF52540">
    <property type="entry name" value="P-loop containing nucleoside triphosphate hydrolases"/>
    <property type="match status" value="1"/>
</dbReference>
<dbReference type="PROSITE" id="PS00617">
    <property type="entry name" value="RECF_1"/>
    <property type="match status" value="1"/>
</dbReference>
<dbReference type="PROSITE" id="PS00618">
    <property type="entry name" value="RECF_2"/>
    <property type="match status" value="1"/>
</dbReference>
<keyword id="KW-0067">ATP-binding</keyword>
<keyword id="KW-0963">Cytoplasm</keyword>
<keyword id="KW-0227">DNA damage</keyword>
<keyword id="KW-0234">DNA repair</keyword>
<keyword id="KW-0235">DNA replication</keyword>
<keyword id="KW-0238">DNA-binding</keyword>
<keyword id="KW-0547">Nucleotide-binding</keyword>
<keyword id="KW-0742">SOS response</keyword>